<proteinExistence type="inferred from homology"/>
<dbReference type="EMBL" id="AM040265">
    <property type="protein sequence ID" value="CAJ12830.1"/>
    <property type="molecule type" value="Genomic_DNA"/>
</dbReference>
<dbReference type="RefSeq" id="WP_002967300.1">
    <property type="nucleotide sequence ID" value="NZ_KN046823.1"/>
</dbReference>
<dbReference type="SMR" id="Q2YKJ5"/>
<dbReference type="STRING" id="359391.BAB2_0664"/>
<dbReference type="KEGG" id="bmf:BAB2_0664"/>
<dbReference type="PATRIC" id="fig|359391.11.peg.2847"/>
<dbReference type="HOGENOM" id="CLU_023171_0_0_5"/>
<dbReference type="Proteomes" id="UP000002719">
    <property type="component" value="Chromosome II"/>
</dbReference>
<dbReference type="GO" id="GO:0043190">
    <property type="term" value="C:ATP-binding cassette (ABC) transporter complex"/>
    <property type="evidence" value="ECO:0007669"/>
    <property type="project" value="InterPro"/>
</dbReference>
<dbReference type="GO" id="GO:0030288">
    <property type="term" value="C:outer membrane-bounded periplasmic space"/>
    <property type="evidence" value="ECO:0007669"/>
    <property type="project" value="TreeGrafter"/>
</dbReference>
<dbReference type="GO" id="GO:1904680">
    <property type="term" value="F:peptide transmembrane transporter activity"/>
    <property type="evidence" value="ECO:0007669"/>
    <property type="project" value="TreeGrafter"/>
</dbReference>
<dbReference type="GO" id="GO:0042884">
    <property type="term" value="P:microcin transport"/>
    <property type="evidence" value="ECO:0007669"/>
    <property type="project" value="TreeGrafter"/>
</dbReference>
<dbReference type="GO" id="GO:0015833">
    <property type="term" value="P:peptide transport"/>
    <property type="evidence" value="ECO:0007669"/>
    <property type="project" value="TreeGrafter"/>
</dbReference>
<dbReference type="CDD" id="cd08497">
    <property type="entry name" value="MbnE-like"/>
    <property type="match status" value="1"/>
</dbReference>
<dbReference type="Gene3D" id="3.10.105.10">
    <property type="entry name" value="Dipeptide-binding Protein, Domain 3"/>
    <property type="match status" value="1"/>
</dbReference>
<dbReference type="Gene3D" id="3.40.190.10">
    <property type="entry name" value="Periplasmic binding protein-like II"/>
    <property type="match status" value="1"/>
</dbReference>
<dbReference type="InterPro" id="IPR030678">
    <property type="entry name" value="Peptide/Ni-bd"/>
</dbReference>
<dbReference type="InterPro" id="IPR039424">
    <property type="entry name" value="SBP_5"/>
</dbReference>
<dbReference type="InterPro" id="IPR000914">
    <property type="entry name" value="SBP_5_dom"/>
</dbReference>
<dbReference type="PANTHER" id="PTHR30290:SF64">
    <property type="entry name" value="ABC TRANSPORTER PERIPLASMIC BINDING PROTEIN"/>
    <property type="match status" value="1"/>
</dbReference>
<dbReference type="PANTHER" id="PTHR30290">
    <property type="entry name" value="PERIPLASMIC BINDING COMPONENT OF ABC TRANSPORTER"/>
    <property type="match status" value="1"/>
</dbReference>
<dbReference type="Pfam" id="PF00496">
    <property type="entry name" value="SBP_bac_5"/>
    <property type="match status" value="1"/>
</dbReference>
<dbReference type="PIRSF" id="PIRSF002741">
    <property type="entry name" value="MppA"/>
    <property type="match status" value="1"/>
</dbReference>
<dbReference type="SUPFAM" id="SSF53850">
    <property type="entry name" value="Periplasmic binding protein-like II"/>
    <property type="match status" value="1"/>
</dbReference>
<protein>
    <recommendedName>
        <fullName>Putative binding protein BAB2_0664</fullName>
    </recommendedName>
</protein>
<accession>Q2YKJ5</accession>
<keyword id="KW-0574">Periplasm</keyword>
<keyword id="KW-1185">Reference proteome</keyword>
<keyword id="KW-0732">Signal</keyword>
<keyword id="KW-0813">Transport</keyword>
<organism>
    <name type="scientific">Brucella abortus (strain 2308)</name>
    <dbReference type="NCBI Taxonomy" id="359391"/>
    <lineage>
        <taxon>Bacteria</taxon>
        <taxon>Pseudomonadati</taxon>
        <taxon>Pseudomonadota</taxon>
        <taxon>Alphaproteobacteria</taxon>
        <taxon>Hyphomicrobiales</taxon>
        <taxon>Brucellaceae</taxon>
        <taxon>Brucella/Ochrobactrum group</taxon>
        <taxon>Brucella</taxon>
    </lineage>
</organism>
<comment type="subcellular location">
    <subcellularLocation>
        <location evidence="2">Periplasm</location>
    </subcellularLocation>
</comment>
<comment type="similarity">
    <text evidence="2">Belongs to the bacterial solute-binding protein 5 family.</text>
</comment>
<gene>
    <name type="ordered locus">BAB2_0664</name>
</gene>
<evidence type="ECO:0000255" key="1"/>
<evidence type="ECO:0000305" key="2"/>
<reference key="1">
    <citation type="journal article" date="2005" name="Infect. Immun.">
        <title>Whole-genome analyses of speciation events in pathogenic Brucellae.</title>
        <authorList>
            <person name="Chain P.S."/>
            <person name="Comerci D.J."/>
            <person name="Tolmasky M.E."/>
            <person name="Larimer F.W."/>
            <person name="Malfatti S.A."/>
            <person name="Vergez L.M."/>
            <person name="Aguero F."/>
            <person name="Land M.L."/>
            <person name="Ugalde R.A."/>
            <person name="Garcia E."/>
        </authorList>
    </citation>
    <scope>NUCLEOTIDE SEQUENCE [LARGE SCALE GENOMIC DNA]</scope>
    <source>
        <strain>2308</strain>
    </source>
</reference>
<name>Y3164_BRUA2</name>
<sequence length="615" mass="69485">MLNRFIAFFRSVFLIGLVATAFGALPARAANETAPDYALSMHGDVALPADYTHFPYTNPDAPKKGSLTVGVVGTFDSLNPFVLKSMRTTARGLYNDGEFGNMVYQTLMLRSRDEPFTLYSLLAEKVAIDPERKWVEFTLNPKAKWSDGQPVTVDDVLFTYDILTEKGRPPYNSRMSRVAKIEKTGERSVRFTFNEKSDREFPMLIAGSMPVLPKHAINRDTFGNSTLEPPIGSGPYVVASVQPGQRIVYKRNPDYWGKDLPSQRGFNNFDKISIEYYRNETSLFESFKKGILDIFIEGNPIRWEKLYDFPAVEQGKVIKDTFEKGTPADMLGFVFNTRRPIFADRRVRQALGLLFDFEWANSNLFAGQYRRTQSFWEGAQLSSVGRPADARERELLAPFPGAVREDVMNGTWHPPVTDGSGHDRVPAKKAYDLLSQAGFQFKDGMAIDPTGKPFAFEIMTRSPDEEKIALAYQRNLSRLGIAVEIHTVDDAQYQQRLQTFDYDMILGALASSLSPGNEQWLRWGSASRDVQGSFNFAGVADPAVDAMIEALLAARNRADFVSAVRALDRVLISGDYYVPLYHLPYQWVARWDRIEHPQKTPLSGYQLPAWWHTSQ</sequence>
<feature type="signal peptide" evidence="1">
    <location>
        <begin position="1"/>
        <end position="29"/>
    </location>
</feature>
<feature type="chain" id="PRO_0000283785" description="Putative binding protein BAB2_0664">
    <location>
        <begin position="30"/>
        <end position="615"/>
    </location>
</feature>